<reference key="1">
    <citation type="journal article" date="2004" name="Nature">
        <title>Genome sequence of the Brown Norway rat yields insights into mammalian evolution.</title>
        <authorList>
            <person name="Gibbs R.A."/>
            <person name="Weinstock G.M."/>
            <person name="Metzker M.L."/>
            <person name="Muzny D.M."/>
            <person name="Sodergren E.J."/>
            <person name="Scherer S."/>
            <person name="Scott G."/>
            <person name="Steffen D."/>
            <person name="Worley K.C."/>
            <person name="Burch P.E."/>
            <person name="Okwuonu G."/>
            <person name="Hines S."/>
            <person name="Lewis L."/>
            <person name="Deramo C."/>
            <person name="Delgado O."/>
            <person name="Dugan-Rocha S."/>
            <person name="Miner G."/>
            <person name="Morgan M."/>
            <person name="Hawes A."/>
            <person name="Gill R."/>
            <person name="Holt R.A."/>
            <person name="Adams M.D."/>
            <person name="Amanatides P.G."/>
            <person name="Baden-Tillson H."/>
            <person name="Barnstead M."/>
            <person name="Chin S."/>
            <person name="Evans C.A."/>
            <person name="Ferriera S."/>
            <person name="Fosler C."/>
            <person name="Glodek A."/>
            <person name="Gu Z."/>
            <person name="Jennings D."/>
            <person name="Kraft C.L."/>
            <person name="Nguyen T."/>
            <person name="Pfannkoch C.M."/>
            <person name="Sitter C."/>
            <person name="Sutton G.G."/>
            <person name="Venter J.C."/>
            <person name="Woodage T."/>
            <person name="Smith D."/>
            <person name="Lee H.-M."/>
            <person name="Gustafson E."/>
            <person name="Cahill P."/>
            <person name="Kana A."/>
            <person name="Doucette-Stamm L."/>
            <person name="Weinstock K."/>
            <person name="Fechtel K."/>
            <person name="Weiss R.B."/>
            <person name="Dunn D.M."/>
            <person name="Green E.D."/>
            <person name="Blakesley R.W."/>
            <person name="Bouffard G.G."/>
            <person name="De Jong P.J."/>
            <person name="Osoegawa K."/>
            <person name="Zhu B."/>
            <person name="Marra M."/>
            <person name="Schein J."/>
            <person name="Bosdet I."/>
            <person name="Fjell C."/>
            <person name="Jones S."/>
            <person name="Krzywinski M."/>
            <person name="Mathewson C."/>
            <person name="Siddiqui A."/>
            <person name="Wye N."/>
            <person name="McPherson J."/>
            <person name="Zhao S."/>
            <person name="Fraser C.M."/>
            <person name="Shetty J."/>
            <person name="Shatsman S."/>
            <person name="Geer K."/>
            <person name="Chen Y."/>
            <person name="Abramzon S."/>
            <person name="Nierman W.C."/>
            <person name="Havlak P.H."/>
            <person name="Chen R."/>
            <person name="Durbin K.J."/>
            <person name="Egan A."/>
            <person name="Ren Y."/>
            <person name="Song X.-Z."/>
            <person name="Li B."/>
            <person name="Liu Y."/>
            <person name="Qin X."/>
            <person name="Cawley S."/>
            <person name="Cooney A.J."/>
            <person name="D'Souza L.M."/>
            <person name="Martin K."/>
            <person name="Wu J.Q."/>
            <person name="Gonzalez-Garay M.L."/>
            <person name="Jackson A.R."/>
            <person name="Kalafus K.J."/>
            <person name="McLeod M.P."/>
            <person name="Milosavljevic A."/>
            <person name="Virk D."/>
            <person name="Volkov A."/>
            <person name="Wheeler D.A."/>
            <person name="Zhang Z."/>
            <person name="Bailey J.A."/>
            <person name="Eichler E.E."/>
            <person name="Tuzun E."/>
            <person name="Birney E."/>
            <person name="Mongin E."/>
            <person name="Ureta-Vidal A."/>
            <person name="Woodwark C."/>
            <person name="Zdobnov E."/>
            <person name="Bork P."/>
            <person name="Suyama M."/>
            <person name="Torrents D."/>
            <person name="Alexandersson M."/>
            <person name="Trask B.J."/>
            <person name="Young J.M."/>
            <person name="Huang H."/>
            <person name="Wang H."/>
            <person name="Xing H."/>
            <person name="Daniels S."/>
            <person name="Gietzen D."/>
            <person name="Schmidt J."/>
            <person name="Stevens K."/>
            <person name="Vitt U."/>
            <person name="Wingrove J."/>
            <person name="Camara F."/>
            <person name="Mar Alba M."/>
            <person name="Abril J.F."/>
            <person name="Guigo R."/>
            <person name="Smit A."/>
            <person name="Dubchak I."/>
            <person name="Rubin E.M."/>
            <person name="Couronne O."/>
            <person name="Poliakov A."/>
            <person name="Huebner N."/>
            <person name="Ganten D."/>
            <person name="Goesele C."/>
            <person name="Hummel O."/>
            <person name="Kreitler T."/>
            <person name="Lee Y.-A."/>
            <person name="Monti J."/>
            <person name="Schulz H."/>
            <person name="Zimdahl H."/>
            <person name="Himmelbauer H."/>
            <person name="Lehrach H."/>
            <person name="Jacob H.J."/>
            <person name="Bromberg S."/>
            <person name="Gullings-Handley J."/>
            <person name="Jensen-Seaman M.I."/>
            <person name="Kwitek A.E."/>
            <person name="Lazar J."/>
            <person name="Pasko D."/>
            <person name="Tonellato P.J."/>
            <person name="Twigger S."/>
            <person name="Ponting C.P."/>
            <person name="Duarte J.M."/>
            <person name="Rice S."/>
            <person name="Goodstadt L."/>
            <person name="Beatson S.A."/>
            <person name="Emes R.D."/>
            <person name="Winter E.E."/>
            <person name="Webber C."/>
            <person name="Brandt P."/>
            <person name="Nyakatura G."/>
            <person name="Adetobi M."/>
            <person name="Chiaromonte F."/>
            <person name="Elnitski L."/>
            <person name="Eswara P."/>
            <person name="Hardison R.C."/>
            <person name="Hou M."/>
            <person name="Kolbe D."/>
            <person name="Makova K."/>
            <person name="Miller W."/>
            <person name="Nekrutenko A."/>
            <person name="Riemer C."/>
            <person name="Schwartz S."/>
            <person name="Taylor J."/>
            <person name="Yang S."/>
            <person name="Zhang Y."/>
            <person name="Lindpaintner K."/>
            <person name="Andrews T.D."/>
            <person name="Caccamo M."/>
            <person name="Clamp M."/>
            <person name="Clarke L."/>
            <person name="Curwen V."/>
            <person name="Durbin R.M."/>
            <person name="Eyras E."/>
            <person name="Searle S.M."/>
            <person name="Cooper G.M."/>
            <person name="Batzoglou S."/>
            <person name="Brudno M."/>
            <person name="Sidow A."/>
            <person name="Stone E.A."/>
            <person name="Payseur B.A."/>
            <person name="Bourque G."/>
            <person name="Lopez-Otin C."/>
            <person name="Puente X.S."/>
            <person name="Chakrabarti K."/>
            <person name="Chatterji S."/>
            <person name="Dewey C."/>
            <person name="Pachter L."/>
            <person name="Bray N."/>
            <person name="Yap V.B."/>
            <person name="Caspi A."/>
            <person name="Tesler G."/>
            <person name="Pevzner P.A."/>
            <person name="Haussler D."/>
            <person name="Roskin K.M."/>
            <person name="Baertsch R."/>
            <person name="Clawson H."/>
            <person name="Furey T.S."/>
            <person name="Hinrichs A.S."/>
            <person name="Karolchik D."/>
            <person name="Kent W.J."/>
            <person name="Rosenbloom K.R."/>
            <person name="Trumbower H."/>
            <person name="Weirauch M."/>
            <person name="Cooper D.N."/>
            <person name="Stenson P.D."/>
            <person name="Ma B."/>
            <person name="Brent M."/>
            <person name="Arumugam M."/>
            <person name="Shteynberg D."/>
            <person name="Copley R.R."/>
            <person name="Taylor M.S."/>
            <person name="Riethman H."/>
            <person name="Mudunuri U."/>
            <person name="Peterson J."/>
            <person name="Guyer M."/>
            <person name="Felsenfeld A."/>
            <person name="Old S."/>
            <person name="Mockrin S."/>
            <person name="Collins F.S."/>
        </authorList>
    </citation>
    <scope>NUCLEOTIDE SEQUENCE [LARGE SCALE GENOMIC DNA]</scope>
    <source>
        <strain>Brown Norway</strain>
    </source>
</reference>
<reference key="2">
    <citation type="journal article" date="2004" name="Genome Res.">
        <title>The status, quality, and expansion of the NIH full-length cDNA project: the Mammalian Gene Collection (MGC).</title>
        <authorList>
            <consortium name="The MGC Project Team"/>
        </authorList>
    </citation>
    <scope>NUCLEOTIDE SEQUENCE [LARGE SCALE MRNA]</scope>
    <source>
        <tissue>Prostate</tissue>
    </source>
</reference>
<keyword id="KW-0325">Glycoprotein</keyword>
<keyword id="KW-0333">Golgi apparatus</keyword>
<keyword id="KW-0472">Membrane</keyword>
<keyword id="KW-1185">Reference proteome</keyword>
<keyword id="KW-0732">Signal</keyword>
<keyword id="KW-0812">Transmembrane</keyword>
<keyword id="KW-1133">Transmembrane helix</keyword>
<proteinExistence type="evidence at transcript level"/>
<dbReference type="EMBL" id="AABR07066499">
    <property type="status" value="NOT_ANNOTATED_CDS"/>
    <property type="molecule type" value="Genomic_DNA"/>
</dbReference>
<dbReference type="EMBL" id="BC061996">
    <property type="protein sequence ID" value="AAH61996.1"/>
    <property type="molecule type" value="mRNA"/>
</dbReference>
<dbReference type="RefSeq" id="NP_955431.1">
    <property type="nucleotide sequence ID" value="NM_199399.1"/>
</dbReference>
<dbReference type="FunCoup" id="Q6P6V6">
    <property type="interactions" value="957"/>
</dbReference>
<dbReference type="STRING" id="10116.ENSRNOP00000064473"/>
<dbReference type="GlyCosmos" id="Q6P6V6">
    <property type="glycosylation" value="4 sites, No reported glycans"/>
</dbReference>
<dbReference type="GlyGen" id="Q6P6V6">
    <property type="glycosylation" value="4 sites"/>
</dbReference>
<dbReference type="iPTMnet" id="Q6P6V6"/>
<dbReference type="PhosphoSitePlus" id="Q6P6V6"/>
<dbReference type="PaxDb" id="10116-ENSRNOP00000064473"/>
<dbReference type="GeneID" id="316136"/>
<dbReference type="KEGG" id="rno:316136"/>
<dbReference type="AGR" id="RGD:735149"/>
<dbReference type="CTD" id="56927"/>
<dbReference type="RGD" id="735149">
    <property type="gene designation" value="Gpr108"/>
</dbReference>
<dbReference type="VEuPathDB" id="HostDB:ENSRNOG00000046128"/>
<dbReference type="eggNOG" id="KOG2569">
    <property type="taxonomic scope" value="Eukaryota"/>
</dbReference>
<dbReference type="HOGENOM" id="CLU_020277_4_1_1"/>
<dbReference type="InParanoid" id="Q6P6V6"/>
<dbReference type="PhylomeDB" id="Q6P6V6"/>
<dbReference type="PRO" id="PR:Q6P6V6"/>
<dbReference type="Proteomes" id="UP000002494">
    <property type="component" value="Chromosome 9"/>
</dbReference>
<dbReference type="Bgee" id="ENSRNOG00000046128">
    <property type="expression patterns" value="Expressed in pancreas and 20 other cell types or tissues"/>
</dbReference>
<dbReference type="GO" id="GO:0033106">
    <property type="term" value="C:cis-Golgi network membrane"/>
    <property type="evidence" value="ECO:0000250"/>
    <property type="project" value="UniProtKB"/>
</dbReference>
<dbReference type="GO" id="GO:0005794">
    <property type="term" value="C:Golgi apparatus"/>
    <property type="evidence" value="ECO:0000250"/>
    <property type="project" value="UniProtKB"/>
</dbReference>
<dbReference type="GO" id="GO:0000139">
    <property type="term" value="C:Golgi membrane"/>
    <property type="evidence" value="ECO:0007669"/>
    <property type="project" value="UniProtKB-SubCell"/>
</dbReference>
<dbReference type="GO" id="GO:0016020">
    <property type="term" value="C:membrane"/>
    <property type="evidence" value="ECO:0000318"/>
    <property type="project" value="GO_Central"/>
</dbReference>
<dbReference type="GO" id="GO:0005802">
    <property type="term" value="C:trans-Golgi network"/>
    <property type="evidence" value="ECO:0000266"/>
    <property type="project" value="RGD"/>
</dbReference>
<dbReference type="GO" id="GO:0034122">
    <property type="term" value="P:negative regulation of toll-like receptor signaling pathway"/>
    <property type="evidence" value="ECO:0000250"/>
    <property type="project" value="UniProtKB"/>
</dbReference>
<dbReference type="GO" id="GO:0050776">
    <property type="term" value="P:regulation of immune response"/>
    <property type="evidence" value="ECO:0000250"/>
    <property type="project" value="UniProtKB"/>
</dbReference>
<dbReference type="InterPro" id="IPR053937">
    <property type="entry name" value="GOST_TM"/>
</dbReference>
<dbReference type="InterPro" id="IPR009637">
    <property type="entry name" value="GPR107/GPR108-like"/>
</dbReference>
<dbReference type="PANTHER" id="PTHR21229">
    <property type="entry name" value="LUNG SEVEN TRANSMEMBRANE RECEPTOR"/>
    <property type="match status" value="1"/>
</dbReference>
<dbReference type="PANTHER" id="PTHR21229:SF11">
    <property type="entry name" value="PROTEIN GPR108"/>
    <property type="match status" value="1"/>
</dbReference>
<dbReference type="Pfam" id="PF06814">
    <property type="entry name" value="GOST_TM"/>
    <property type="match status" value="1"/>
</dbReference>
<name>GP108_RAT</name>
<sequence length="577" mass="64689">MAVSERRGLSGESPAQCRWEYLSLLVLMLSGCSGRIHRLTLTGEKRADIQLNSFGFYTNGSLEVELSLLRLSLQETEDKFPKVGFSLSRVRSGSVRSYSSRNSHECPLERNSSNFLVLFLINIKDLQVQVRKYGEQKLFISPGLLPEAPSQSGPPKPDPTGTPKDNHVIHPSPKKMSAVKEDQAKLTVPQVSGDKALPAGHRHSSDGQPQSQPPTRGPSGKEKDLVLGLGHLNDSYNFSFHIVIGSRAEEGQYSLNFHNCYNTIPGQEQPFDLTVMIREKNPEGFLSAAEIPLFKLYLIMSACFLAAGIFWVSVLCKNTYSVFKIHWLMAALAFTKSVSLLFHSINYYFINSQGHPIEGLAVMHYITHLLKGALLFITIALIGSGWAFVKYMLSDKEKKIFGIVIPLQVLANVAYIVIESREEGASDYGLWKEILFLVDLICCGAILFPVVWSIRHLQDASGTDGKVAVNLAKLKLFRHYYVMVICYIYFTRIIAILLRVAVPFQWQWLYQLLVESSTLAFFVLTGYKFQPAGDNPYLQLPQQEDEEDVQMEQVMTDSGFREGLSKVNKTASGRELL</sequence>
<accession>Q6P6V6</accession>
<accession>M0R518</accession>
<feature type="signal peptide" evidence="3">
    <location>
        <begin position="1"/>
        <end position="34"/>
    </location>
</feature>
<feature type="chain" id="PRO_0000045085" description="Protein GPR108">
    <location>
        <begin position="35"/>
        <end position="577"/>
    </location>
</feature>
<feature type="transmembrane region" description="Helical; Name=1" evidence="3">
    <location>
        <begin position="296"/>
        <end position="316"/>
    </location>
</feature>
<feature type="transmembrane region" description="Helical; Name=2" evidence="3">
    <location>
        <begin position="325"/>
        <end position="345"/>
    </location>
</feature>
<feature type="transmembrane region" description="Helical; Name=3" evidence="3">
    <location>
        <begin position="369"/>
        <end position="389"/>
    </location>
</feature>
<feature type="transmembrane region" description="Helical; Name=4" evidence="3">
    <location>
        <begin position="400"/>
        <end position="420"/>
    </location>
</feature>
<feature type="transmembrane region" description="Helical; Name=5" evidence="3">
    <location>
        <begin position="434"/>
        <end position="454"/>
    </location>
</feature>
<feature type="transmembrane region" description="Helical; Name=6" evidence="3">
    <location>
        <begin position="482"/>
        <end position="502"/>
    </location>
</feature>
<feature type="transmembrane region" description="Helical; Name=7" evidence="3">
    <location>
        <begin position="506"/>
        <end position="526"/>
    </location>
</feature>
<feature type="region of interest" description="Disordered" evidence="4">
    <location>
        <begin position="144"/>
        <end position="224"/>
    </location>
</feature>
<feature type="glycosylation site" description="N-linked (GlcNAc...) asparagine" evidence="3">
    <location>
        <position position="59"/>
    </location>
</feature>
<feature type="glycosylation site" description="N-linked (GlcNAc...) asparagine" evidence="3">
    <location>
        <position position="111"/>
    </location>
</feature>
<feature type="glycosylation site" description="N-linked (GlcNAc...) asparagine" evidence="3">
    <location>
        <position position="233"/>
    </location>
</feature>
<feature type="glycosylation site" description="N-linked (GlcNAc...) asparagine" evidence="3">
    <location>
        <position position="237"/>
    </location>
</feature>
<feature type="sequence conflict" description="In Ref. 2; AAH61996." ref="2">
    <original>V</original>
    <variation>M</variation>
    <location>
        <position position="469"/>
    </location>
</feature>
<comment type="function">
    <text evidence="1">May play a role in intracellular immune modulation by activating NF-kappaB response and attenuating Toll-like-receptor response.</text>
</comment>
<comment type="subcellular location">
    <subcellularLocation>
        <location evidence="1">Golgi apparatus</location>
        <location evidence="1">cis-Golgi network membrane</location>
        <topology evidence="1">Multi-pass membrane protein</topology>
    </subcellularLocation>
    <subcellularLocation>
        <location evidence="2">Golgi apparatus</location>
        <location evidence="2">trans-Golgi network membrane</location>
        <topology evidence="1">Multi-pass membrane protein</topology>
    </subcellularLocation>
    <subcellularLocation>
        <location evidence="2">Golgi apparatus membrane</location>
        <topology evidence="3">Multi-pass membrane protein</topology>
    </subcellularLocation>
    <text evidence="1">Colocalizes with TLR3, -7, -4, and -9.</text>
</comment>
<comment type="similarity">
    <text evidence="5">Belongs to the LU7TM family.</text>
</comment>
<protein>
    <recommendedName>
        <fullName>Protein GPR108</fullName>
    </recommendedName>
</protein>
<evidence type="ECO:0000250" key="1">
    <source>
        <dbReference type="UniProtKB" id="Q91WD0"/>
    </source>
</evidence>
<evidence type="ECO:0000250" key="2">
    <source>
        <dbReference type="UniProtKB" id="Q9NPR9"/>
    </source>
</evidence>
<evidence type="ECO:0000255" key="3"/>
<evidence type="ECO:0000256" key="4">
    <source>
        <dbReference type="SAM" id="MobiDB-lite"/>
    </source>
</evidence>
<evidence type="ECO:0000305" key="5"/>
<organism>
    <name type="scientific">Rattus norvegicus</name>
    <name type="common">Rat</name>
    <dbReference type="NCBI Taxonomy" id="10116"/>
    <lineage>
        <taxon>Eukaryota</taxon>
        <taxon>Metazoa</taxon>
        <taxon>Chordata</taxon>
        <taxon>Craniata</taxon>
        <taxon>Vertebrata</taxon>
        <taxon>Euteleostomi</taxon>
        <taxon>Mammalia</taxon>
        <taxon>Eutheria</taxon>
        <taxon>Euarchontoglires</taxon>
        <taxon>Glires</taxon>
        <taxon>Rodentia</taxon>
        <taxon>Myomorpha</taxon>
        <taxon>Muroidea</taxon>
        <taxon>Muridae</taxon>
        <taxon>Murinae</taxon>
        <taxon>Rattus</taxon>
    </lineage>
</organism>
<gene>
    <name type="primary">Gpr108</name>
</gene>